<protein>
    <recommendedName>
        <fullName evidence="1">DNA-binding protein STK_13740</fullName>
    </recommendedName>
</protein>
<feature type="chain" id="PRO_0000121566" description="DNA-binding protein STK_13740">
    <location>
        <begin position="1"/>
        <end position="115"/>
    </location>
</feature>
<keyword id="KW-0238">DNA-binding</keyword>
<keyword id="KW-1185">Reference proteome</keyword>
<organism>
    <name type="scientific">Sulfurisphaera tokodaii (strain DSM 16993 / JCM 10545 / NBRC 100140 / 7)</name>
    <name type="common">Sulfolobus tokodaii</name>
    <dbReference type="NCBI Taxonomy" id="273063"/>
    <lineage>
        <taxon>Archaea</taxon>
        <taxon>Thermoproteota</taxon>
        <taxon>Thermoprotei</taxon>
        <taxon>Sulfolobales</taxon>
        <taxon>Sulfolobaceae</taxon>
        <taxon>Sulfurisphaera</taxon>
    </lineage>
</organism>
<proteinExistence type="inferred from homology"/>
<evidence type="ECO:0000255" key="1">
    <source>
        <dbReference type="HAMAP-Rule" id="MF_00026"/>
    </source>
</evidence>
<accession>Q971I0</accession>
<accession>F9VP40</accession>
<gene>
    <name type="ordered locus">STK_13740</name>
</gene>
<name>Y1374_SULTO</name>
<reference key="1">
    <citation type="journal article" date="2001" name="DNA Res.">
        <title>Complete genome sequence of an aerobic thermoacidophilic Crenarchaeon, Sulfolobus tokodaii strain7.</title>
        <authorList>
            <person name="Kawarabayasi Y."/>
            <person name="Hino Y."/>
            <person name="Horikawa H."/>
            <person name="Jin-no K."/>
            <person name="Takahashi M."/>
            <person name="Sekine M."/>
            <person name="Baba S."/>
            <person name="Ankai A."/>
            <person name="Kosugi H."/>
            <person name="Hosoyama A."/>
            <person name="Fukui S."/>
            <person name="Nagai Y."/>
            <person name="Nishijima K."/>
            <person name="Otsuka R."/>
            <person name="Nakazawa H."/>
            <person name="Takamiya M."/>
            <person name="Kato Y."/>
            <person name="Yoshizawa T."/>
            <person name="Tanaka T."/>
            <person name="Kudoh Y."/>
            <person name="Yamazaki J."/>
            <person name="Kushida N."/>
            <person name="Oguchi A."/>
            <person name="Aoki K."/>
            <person name="Masuda S."/>
            <person name="Yanagii M."/>
            <person name="Nishimura M."/>
            <person name="Yamagishi A."/>
            <person name="Oshima T."/>
            <person name="Kikuchi H."/>
        </authorList>
    </citation>
    <scope>NUCLEOTIDE SEQUENCE [LARGE SCALE GENOMIC DNA]</scope>
    <source>
        <strain>DSM 16993 / JCM 10545 / NBRC 100140 / 7</strain>
    </source>
</reference>
<comment type="similarity">
    <text evidence="1">Belongs to the PDCD5 family.</text>
</comment>
<sequence length="115" mass="13376">MSDEYDAELDELLRRKALEQQRKALEEQQRKAELEAKKDAILRVILTPEARQRLANVKLVKPELAEAIENQLIALAQSGRIQAPITDEELKEILAQLTNQTRKDYKITIRERGWK</sequence>
<dbReference type="EMBL" id="BA000023">
    <property type="protein sequence ID" value="BAK54548.1"/>
    <property type="molecule type" value="Genomic_DNA"/>
</dbReference>
<dbReference type="SMR" id="Q971I0"/>
<dbReference type="STRING" id="273063.STK_13740"/>
<dbReference type="KEGG" id="sto:STK_13740"/>
<dbReference type="PATRIC" id="fig|273063.9.peg.1572"/>
<dbReference type="eggNOG" id="arCOG04179">
    <property type="taxonomic scope" value="Archaea"/>
</dbReference>
<dbReference type="Proteomes" id="UP000001015">
    <property type="component" value="Chromosome"/>
</dbReference>
<dbReference type="GO" id="GO:0005829">
    <property type="term" value="C:cytosol"/>
    <property type="evidence" value="ECO:0007669"/>
    <property type="project" value="TreeGrafter"/>
</dbReference>
<dbReference type="GO" id="GO:0003677">
    <property type="term" value="F:DNA binding"/>
    <property type="evidence" value="ECO:0007669"/>
    <property type="project" value="UniProtKB-UniRule"/>
</dbReference>
<dbReference type="FunFam" id="1.10.8.140:FF:000004">
    <property type="entry name" value="DNA-binding protein PAE3044"/>
    <property type="match status" value="1"/>
</dbReference>
<dbReference type="Gene3D" id="1.10.8.140">
    <property type="entry name" value="PDCD5-like"/>
    <property type="match status" value="1"/>
</dbReference>
<dbReference type="HAMAP" id="MF_00026">
    <property type="entry name" value="dsDNA_bind"/>
    <property type="match status" value="1"/>
</dbReference>
<dbReference type="InterPro" id="IPR022889">
    <property type="entry name" value="DNA_bind_arc"/>
</dbReference>
<dbReference type="InterPro" id="IPR002836">
    <property type="entry name" value="PDCD5-like"/>
</dbReference>
<dbReference type="InterPro" id="IPR036883">
    <property type="entry name" value="PDCD5-like_sf"/>
</dbReference>
<dbReference type="NCBIfam" id="NF003268">
    <property type="entry name" value="PRK04239.1"/>
    <property type="match status" value="1"/>
</dbReference>
<dbReference type="PANTHER" id="PTHR10840">
    <property type="entry name" value="PROGRAMMED CELL DEATH PROTEIN 5"/>
    <property type="match status" value="1"/>
</dbReference>
<dbReference type="PANTHER" id="PTHR10840:SF0">
    <property type="entry name" value="PROGRAMMED CELL DEATH PROTEIN 5"/>
    <property type="match status" value="1"/>
</dbReference>
<dbReference type="Pfam" id="PF01984">
    <property type="entry name" value="dsDNA_bind"/>
    <property type="match status" value="1"/>
</dbReference>
<dbReference type="PIRSF" id="PIRSF015730">
    <property type="entry name" value="TFAR19"/>
    <property type="match status" value="1"/>
</dbReference>
<dbReference type="SUPFAM" id="SSF46950">
    <property type="entry name" value="Double-stranded DNA-binding domain"/>
    <property type="match status" value="1"/>
</dbReference>